<keyword id="KW-0963">Cytoplasm</keyword>
<keyword id="KW-0238">DNA-binding</keyword>
<keyword id="KW-0677">Repeat</keyword>
<keyword id="KW-0804">Transcription</keyword>
<keyword id="KW-0805">Transcription regulation</keyword>
<organism>
    <name type="scientific">Xanthomonas axonopodis pv. citri (strain 306)</name>
    <dbReference type="NCBI Taxonomy" id="190486"/>
    <lineage>
        <taxon>Bacteria</taxon>
        <taxon>Pseudomonadati</taxon>
        <taxon>Pseudomonadota</taxon>
        <taxon>Gammaproteobacteria</taxon>
        <taxon>Lysobacterales</taxon>
        <taxon>Lysobacteraceae</taxon>
        <taxon>Xanthomonas</taxon>
    </lineage>
</organism>
<proteinExistence type="inferred from homology"/>
<comment type="subunit">
    <text evidence="1">Forms oligomers.</text>
</comment>
<comment type="subcellular location">
    <subcellularLocation>
        <location evidence="1">Cytoplasm</location>
        <location evidence="1">Nucleoid</location>
    </subcellularLocation>
</comment>
<comment type="similarity">
    <text evidence="1">Belongs to the MraZ family.</text>
</comment>
<protein>
    <recommendedName>
        <fullName>Transcriptional regulator MraZ</fullName>
    </recommendedName>
</protein>
<gene>
    <name evidence="1" type="primary">mraZ</name>
    <name type="ordered locus">XAC0771</name>
</gene>
<sequence length="148" mass="16555">MFQGETAITVDDKGRMAVPTAYRDLVARVSGNRLVLTYNPFEAGCLWLYAEKEWERVRDDVMSKPNTQRVVRTLQQKLVGSSAVLELDANGRLSIPASHRNAVGIEKKAVLLGMGDKFELWSEQAHRALIQQTLSDGDLGDELLDLRL</sequence>
<feature type="chain" id="PRO_0000108556" description="Transcriptional regulator MraZ">
    <location>
        <begin position="1"/>
        <end position="148"/>
    </location>
</feature>
<feature type="domain" description="SpoVT-AbrB 1" evidence="2">
    <location>
        <begin position="5"/>
        <end position="53"/>
    </location>
</feature>
<feature type="domain" description="SpoVT-AbrB 2" evidence="2">
    <location>
        <begin position="82"/>
        <end position="125"/>
    </location>
</feature>
<evidence type="ECO:0000255" key="1">
    <source>
        <dbReference type="HAMAP-Rule" id="MF_01008"/>
    </source>
</evidence>
<evidence type="ECO:0000255" key="2">
    <source>
        <dbReference type="PROSITE-ProRule" id="PRU01076"/>
    </source>
</evidence>
<name>MRAZ_XANAC</name>
<reference key="1">
    <citation type="journal article" date="2002" name="Nature">
        <title>Comparison of the genomes of two Xanthomonas pathogens with differing host specificities.</title>
        <authorList>
            <person name="da Silva A.C.R."/>
            <person name="Ferro J.A."/>
            <person name="Reinach F.C."/>
            <person name="Farah C.S."/>
            <person name="Furlan L.R."/>
            <person name="Quaggio R.B."/>
            <person name="Monteiro-Vitorello C.B."/>
            <person name="Van Sluys M.A."/>
            <person name="Almeida N.F. Jr."/>
            <person name="Alves L.M.C."/>
            <person name="do Amaral A.M."/>
            <person name="Bertolini M.C."/>
            <person name="Camargo L.E.A."/>
            <person name="Camarotte G."/>
            <person name="Cannavan F."/>
            <person name="Cardozo J."/>
            <person name="Chambergo F."/>
            <person name="Ciapina L.P."/>
            <person name="Cicarelli R.M.B."/>
            <person name="Coutinho L.L."/>
            <person name="Cursino-Santos J.R."/>
            <person name="El-Dorry H."/>
            <person name="Faria J.B."/>
            <person name="Ferreira A.J.S."/>
            <person name="Ferreira R.C.C."/>
            <person name="Ferro M.I.T."/>
            <person name="Formighieri E.F."/>
            <person name="Franco M.C."/>
            <person name="Greggio C.C."/>
            <person name="Gruber A."/>
            <person name="Katsuyama A.M."/>
            <person name="Kishi L.T."/>
            <person name="Leite R.P."/>
            <person name="Lemos E.G.M."/>
            <person name="Lemos M.V.F."/>
            <person name="Locali E.C."/>
            <person name="Machado M.A."/>
            <person name="Madeira A.M.B.N."/>
            <person name="Martinez-Rossi N.M."/>
            <person name="Martins E.C."/>
            <person name="Meidanis J."/>
            <person name="Menck C.F.M."/>
            <person name="Miyaki C.Y."/>
            <person name="Moon D.H."/>
            <person name="Moreira L.M."/>
            <person name="Novo M.T.M."/>
            <person name="Okura V.K."/>
            <person name="Oliveira M.C."/>
            <person name="Oliveira V.R."/>
            <person name="Pereira H.A."/>
            <person name="Rossi A."/>
            <person name="Sena J.A.D."/>
            <person name="Silva C."/>
            <person name="de Souza R.F."/>
            <person name="Spinola L.A.F."/>
            <person name="Takita M.A."/>
            <person name="Tamura R.E."/>
            <person name="Teixeira E.C."/>
            <person name="Tezza R.I.D."/>
            <person name="Trindade dos Santos M."/>
            <person name="Truffi D."/>
            <person name="Tsai S.M."/>
            <person name="White F.F."/>
            <person name="Setubal J.C."/>
            <person name="Kitajima J.P."/>
        </authorList>
    </citation>
    <scope>NUCLEOTIDE SEQUENCE [LARGE SCALE GENOMIC DNA]</scope>
    <source>
        <strain>306</strain>
    </source>
</reference>
<accession>Q8PPB6</accession>
<dbReference type="EMBL" id="AE008923">
    <property type="protein sequence ID" value="AAM35659.1"/>
    <property type="molecule type" value="Genomic_DNA"/>
</dbReference>
<dbReference type="SMR" id="Q8PPB6"/>
<dbReference type="KEGG" id="xac:XAC0771"/>
<dbReference type="eggNOG" id="COG2001">
    <property type="taxonomic scope" value="Bacteria"/>
</dbReference>
<dbReference type="HOGENOM" id="CLU_107907_2_0_6"/>
<dbReference type="Proteomes" id="UP000000576">
    <property type="component" value="Chromosome"/>
</dbReference>
<dbReference type="GO" id="GO:0005737">
    <property type="term" value="C:cytoplasm"/>
    <property type="evidence" value="ECO:0007669"/>
    <property type="project" value="UniProtKB-UniRule"/>
</dbReference>
<dbReference type="GO" id="GO:0009295">
    <property type="term" value="C:nucleoid"/>
    <property type="evidence" value="ECO:0007669"/>
    <property type="project" value="UniProtKB-SubCell"/>
</dbReference>
<dbReference type="GO" id="GO:0003700">
    <property type="term" value="F:DNA-binding transcription factor activity"/>
    <property type="evidence" value="ECO:0007669"/>
    <property type="project" value="UniProtKB-UniRule"/>
</dbReference>
<dbReference type="GO" id="GO:0000976">
    <property type="term" value="F:transcription cis-regulatory region binding"/>
    <property type="evidence" value="ECO:0007669"/>
    <property type="project" value="TreeGrafter"/>
</dbReference>
<dbReference type="GO" id="GO:2000143">
    <property type="term" value="P:negative regulation of DNA-templated transcription initiation"/>
    <property type="evidence" value="ECO:0007669"/>
    <property type="project" value="TreeGrafter"/>
</dbReference>
<dbReference type="CDD" id="cd16321">
    <property type="entry name" value="MraZ_C"/>
    <property type="match status" value="1"/>
</dbReference>
<dbReference type="CDD" id="cd16320">
    <property type="entry name" value="MraZ_N"/>
    <property type="match status" value="1"/>
</dbReference>
<dbReference type="FunFam" id="3.40.1550.20:FF:000003">
    <property type="entry name" value="Transcriptional regulator MraZ"/>
    <property type="match status" value="1"/>
</dbReference>
<dbReference type="Gene3D" id="3.40.1550.20">
    <property type="entry name" value="Transcriptional regulator MraZ domain"/>
    <property type="match status" value="1"/>
</dbReference>
<dbReference type="HAMAP" id="MF_01008">
    <property type="entry name" value="MraZ"/>
    <property type="match status" value="1"/>
</dbReference>
<dbReference type="InterPro" id="IPR003444">
    <property type="entry name" value="MraZ"/>
</dbReference>
<dbReference type="InterPro" id="IPR035644">
    <property type="entry name" value="MraZ_C"/>
</dbReference>
<dbReference type="InterPro" id="IPR020603">
    <property type="entry name" value="MraZ_dom"/>
</dbReference>
<dbReference type="InterPro" id="IPR035642">
    <property type="entry name" value="MraZ_N"/>
</dbReference>
<dbReference type="InterPro" id="IPR038619">
    <property type="entry name" value="MraZ_sf"/>
</dbReference>
<dbReference type="InterPro" id="IPR007159">
    <property type="entry name" value="SpoVT-AbrB_dom"/>
</dbReference>
<dbReference type="InterPro" id="IPR037914">
    <property type="entry name" value="SpoVT-AbrB_sf"/>
</dbReference>
<dbReference type="NCBIfam" id="TIGR00242">
    <property type="entry name" value="division/cell wall cluster transcriptional repressor MraZ"/>
    <property type="match status" value="1"/>
</dbReference>
<dbReference type="PANTHER" id="PTHR34701">
    <property type="entry name" value="TRANSCRIPTIONAL REGULATOR MRAZ"/>
    <property type="match status" value="1"/>
</dbReference>
<dbReference type="PANTHER" id="PTHR34701:SF1">
    <property type="entry name" value="TRANSCRIPTIONAL REGULATOR MRAZ"/>
    <property type="match status" value="1"/>
</dbReference>
<dbReference type="Pfam" id="PF02381">
    <property type="entry name" value="MraZ"/>
    <property type="match status" value="2"/>
</dbReference>
<dbReference type="SUPFAM" id="SSF89447">
    <property type="entry name" value="AbrB/MazE/MraZ-like"/>
    <property type="match status" value="1"/>
</dbReference>
<dbReference type="PROSITE" id="PS51740">
    <property type="entry name" value="SPOVT_ABRB"/>
    <property type="match status" value="2"/>
</dbReference>